<dbReference type="EC" id="4.2.1.59" evidence="1"/>
<dbReference type="EMBL" id="CP000305">
    <property type="protein sequence ID" value="ABG19272.1"/>
    <property type="molecule type" value="Genomic_DNA"/>
</dbReference>
<dbReference type="EMBL" id="ACNQ01000017">
    <property type="protein sequence ID" value="EEO75421.1"/>
    <property type="molecule type" value="Genomic_DNA"/>
</dbReference>
<dbReference type="RefSeq" id="WP_002217656.1">
    <property type="nucleotide sequence ID" value="NZ_ACNQ01000017.1"/>
</dbReference>
<dbReference type="SMR" id="Q1CFF8"/>
<dbReference type="KEGG" id="ypn:YPN_2945"/>
<dbReference type="HOGENOM" id="CLU_078912_1_0_6"/>
<dbReference type="Proteomes" id="UP000008936">
    <property type="component" value="Chromosome"/>
</dbReference>
<dbReference type="GO" id="GO:0005737">
    <property type="term" value="C:cytoplasm"/>
    <property type="evidence" value="ECO:0007669"/>
    <property type="project" value="UniProtKB-SubCell"/>
</dbReference>
<dbReference type="GO" id="GO:0016020">
    <property type="term" value="C:membrane"/>
    <property type="evidence" value="ECO:0007669"/>
    <property type="project" value="GOC"/>
</dbReference>
<dbReference type="GO" id="GO:0019171">
    <property type="term" value="F:(3R)-hydroxyacyl-[acyl-carrier-protein] dehydratase activity"/>
    <property type="evidence" value="ECO:0007669"/>
    <property type="project" value="UniProtKB-EC"/>
</dbReference>
<dbReference type="GO" id="GO:0006633">
    <property type="term" value="P:fatty acid biosynthetic process"/>
    <property type="evidence" value="ECO:0007669"/>
    <property type="project" value="UniProtKB-UniRule"/>
</dbReference>
<dbReference type="GO" id="GO:0009245">
    <property type="term" value="P:lipid A biosynthetic process"/>
    <property type="evidence" value="ECO:0007669"/>
    <property type="project" value="UniProtKB-UniRule"/>
</dbReference>
<dbReference type="CDD" id="cd01288">
    <property type="entry name" value="FabZ"/>
    <property type="match status" value="1"/>
</dbReference>
<dbReference type="FunFam" id="3.10.129.10:FF:000001">
    <property type="entry name" value="3-hydroxyacyl-[acyl-carrier-protein] dehydratase FabZ"/>
    <property type="match status" value="1"/>
</dbReference>
<dbReference type="Gene3D" id="3.10.129.10">
    <property type="entry name" value="Hotdog Thioesterase"/>
    <property type="match status" value="1"/>
</dbReference>
<dbReference type="HAMAP" id="MF_00406">
    <property type="entry name" value="FabZ"/>
    <property type="match status" value="1"/>
</dbReference>
<dbReference type="InterPro" id="IPR013114">
    <property type="entry name" value="FabA_FabZ"/>
</dbReference>
<dbReference type="InterPro" id="IPR010084">
    <property type="entry name" value="FabZ"/>
</dbReference>
<dbReference type="InterPro" id="IPR029069">
    <property type="entry name" value="HotDog_dom_sf"/>
</dbReference>
<dbReference type="NCBIfam" id="TIGR01750">
    <property type="entry name" value="fabZ"/>
    <property type="match status" value="1"/>
</dbReference>
<dbReference type="NCBIfam" id="NF000582">
    <property type="entry name" value="PRK00006.1"/>
    <property type="match status" value="1"/>
</dbReference>
<dbReference type="PANTHER" id="PTHR30272">
    <property type="entry name" value="3-HYDROXYACYL-[ACYL-CARRIER-PROTEIN] DEHYDRATASE"/>
    <property type="match status" value="1"/>
</dbReference>
<dbReference type="PANTHER" id="PTHR30272:SF1">
    <property type="entry name" value="3-HYDROXYACYL-[ACYL-CARRIER-PROTEIN] DEHYDRATASE"/>
    <property type="match status" value="1"/>
</dbReference>
<dbReference type="Pfam" id="PF07977">
    <property type="entry name" value="FabA"/>
    <property type="match status" value="1"/>
</dbReference>
<dbReference type="SUPFAM" id="SSF54637">
    <property type="entry name" value="Thioesterase/thiol ester dehydrase-isomerase"/>
    <property type="match status" value="1"/>
</dbReference>
<feature type="chain" id="PRO_0000301939" description="3-hydroxyacyl-[acyl-carrier-protein] dehydratase FabZ">
    <location>
        <begin position="1"/>
        <end position="176"/>
    </location>
</feature>
<feature type="active site" evidence="1">
    <location>
        <position position="54"/>
    </location>
</feature>
<organism>
    <name type="scientific">Yersinia pestis bv. Antiqua (strain Nepal516)</name>
    <dbReference type="NCBI Taxonomy" id="377628"/>
    <lineage>
        <taxon>Bacteria</taxon>
        <taxon>Pseudomonadati</taxon>
        <taxon>Pseudomonadota</taxon>
        <taxon>Gammaproteobacteria</taxon>
        <taxon>Enterobacterales</taxon>
        <taxon>Yersiniaceae</taxon>
        <taxon>Yersinia</taxon>
    </lineage>
</organism>
<proteinExistence type="inferred from homology"/>
<name>FABZ_YERPN</name>
<accession>Q1CFF8</accession>
<accession>C4GWX1</accession>
<sequence length="176" mass="19631">MTTDTHTLHIEEILDLLPHRFPFLLVDRVLDFEEGKFLRAVKNVSFNEPFFQGHFPGKPIFPGVLILEAMAQATGILAFKSRGKLEPGELYYFAGIDEARFKRPVVPGDQMIMEVEFVKERRGLTRFTGVAKVDGEIVCTATMMCARSKPAAPAESVVVKPDVVKPDVVNPVVKES</sequence>
<evidence type="ECO:0000255" key="1">
    <source>
        <dbReference type="HAMAP-Rule" id="MF_00406"/>
    </source>
</evidence>
<comment type="function">
    <text evidence="1">Involved in unsaturated fatty acids biosynthesis. Catalyzes the dehydration of short chain beta-hydroxyacyl-ACPs and long chain saturated and unsaturated beta-hydroxyacyl-ACPs.</text>
</comment>
<comment type="catalytic activity">
    <reaction evidence="1">
        <text>a (3R)-hydroxyacyl-[ACP] = a (2E)-enoyl-[ACP] + H2O</text>
        <dbReference type="Rhea" id="RHEA:13097"/>
        <dbReference type="Rhea" id="RHEA-COMP:9925"/>
        <dbReference type="Rhea" id="RHEA-COMP:9945"/>
        <dbReference type="ChEBI" id="CHEBI:15377"/>
        <dbReference type="ChEBI" id="CHEBI:78784"/>
        <dbReference type="ChEBI" id="CHEBI:78827"/>
        <dbReference type="EC" id="4.2.1.59"/>
    </reaction>
</comment>
<comment type="subcellular location">
    <subcellularLocation>
        <location evidence="1">Cytoplasm</location>
    </subcellularLocation>
</comment>
<comment type="similarity">
    <text evidence="1">Belongs to the thioester dehydratase family. FabZ subfamily.</text>
</comment>
<gene>
    <name evidence="1" type="primary">fabZ</name>
    <name type="ordered locus">YPN_2945</name>
    <name type="ORF">YP516_3335</name>
</gene>
<keyword id="KW-0963">Cytoplasm</keyword>
<keyword id="KW-0441">Lipid A biosynthesis</keyword>
<keyword id="KW-0444">Lipid biosynthesis</keyword>
<keyword id="KW-0443">Lipid metabolism</keyword>
<keyword id="KW-0456">Lyase</keyword>
<reference key="1">
    <citation type="journal article" date="2006" name="J. Bacteriol.">
        <title>Complete genome sequence of Yersinia pestis strains Antiqua and Nepal516: evidence of gene reduction in an emerging pathogen.</title>
        <authorList>
            <person name="Chain P.S.G."/>
            <person name="Hu P."/>
            <person name="Malfatti S.A."/>
            <person name="Radnedge L."/>
            <person name="Larimer F."/>
            <person name="Vergez L.M."/>
            <person name="Worsham P."/>
            <person name="Chu M.C."/>
            <person name="Andersen G.L."/>
        </authorList>
    </citation>
    <scope>NUCLEOTIDE SEQUENCE [LARGE SCALE GENOMIC DNA]</scope>
    <source>
        <strain>Nepal516</strain>
    </source>
</reference>
<reference key="2">
    <citation type="submission" date="2009-04" db="EMBL/GenBank/DDBJ databases">
        <title>Yersinia pestis Nepal516A whole genome shotgun sequencing project.</title>
        <authorList>
            <person name="Plunkett G. III"/>
            <person name="Anderson B.D."/>
            <person name="Baumler D.J."/>
            <person name="Burland V."/>
            <person name="Cabot E.L."/>
            <person name="Glasner J.D."/>
            <person name="Mau B."/>
            <person name="Neeno-Eckwall E."/>
            <person name="Perna N.T."/>
            <person name="Munk A.C."/>
            <person name="Tapia R."/>
            <person name="Green L.D."/>
            <person name="Rogers Y.C."/>
            <person name="Detter J.C."/>
            <person name="Bruce D.C."/>
            <person name="Brettin T.S."/>
        </authorList>
    </citation>
    <scope>NUCLEOTIDE SEQUENCE [LARGE SCALE GENOMIC DNA]</scope>
    <source>
        <strain>Nepal516</strain>
    </source>
</reference>
<protein>
    <recommendedName>
        <fullName evidence="1">3-hydroxyacyl-[acyl-carrier-protein] dehydratase FabZ</fullName>
        <ecNumber evidence="1">4.2.1.59</ecNumber>
    </recommendedName>
    <alternativeName>
        <fullName evidence="1">(3R)-hydroxymyristoyl-[acyl-carrier-protein] dehydratase</fullName>
        <shortName evidence="1">(3R)-hydroxymyristoyl-ACP dehydrase</shortName>
    </alternativeName>
    <alternativeName>
        <fullName evidence="1">Beta-hydroxyacyl-ACP dehydratase</fullName>
    </alternativeName>
</protein>